<comment type="function">
    <text evidence="1">The glycine cleavage system catalyzes the degradation of glycine.</text>
</comment>
<comment type="catalytic activity">
    <reaction evidence="1">
        <text>N(6)-[(R)-S(8)-aminomethyldihydrolipoyl]-L-lysyl-[protein] + (6S)-5,6,7,8-tetrahydrofolate = N(6)-[(R)-dihydrolipoyl]-L-lysyl-[protein] + (6R)-5,10-methylene-5,6,7,8-tetrahydrofolate + NH4(+)</text>
        <dbReference type="Rhea" id="RHEA:16945"/>
        <dbReference type="Rhea" id="RHEA-COMP:10475"/>
        <dbReference type="Rhea" id="RHEA-COMP:10492"/>
        <dbReference type="ChEBI" id="CHEBI:15636"/>
        <dbReference type="ChEBI" id="CHEBI:28938"/>
        <dbReference type="ChEBI" id="CHEBI:57453"/>
        <dbReference type="ChEBI" id="CHEBI:83100"/>
        <dbReference type="ChEBI" id="CHEBI:83143"/>
        <dbReference type="EC" id="2.1.2.10"/>
    </reaction>
</comment>
<comment type="subunit">
    <text evidence="1">The glycine cleavage system is composed of four proteins: P, T, L and H.</text>
</comment>
<comment type="similarity">
    <text evidence="1">Belongs to the GcvT family.</text>
</comment>
<keyword id="KW-0032">Aminotransferase</keyword>
<keyword id="KW-0808">Transferase</keyword>
<sequence length="371" mass="39520">MTTLRRTPLAAVHESLGASFTDFAGWNMPVRYSSDLAEHHAVRKNAGIFDLSHMGEIRISGPDSGAALDYALAGKLSAVAEGRAKYSLLLTDEGGVVDDLVTYHLPDGDYLVVANAANAETDLAEFTKRCARFDVTVTDESAQTALVAVQGPTAVKIVLAALQKANTTLDSDEVRDVKYYRCLTGELDGFPVLVARTGYTGEDGYELYVPAKAAAHLWQLLMDAGGEDLTPCGLACRDTLRLEAGMPLYGHELGTDIHPSQAGLGRVVNFKKEGDFVGRCALENRDTTADRVLVGLTGEGRRAGRAGYAVVNEDKTVGAITSGILSPTLGHPIAMAFVDPDVAKIGTSLSVDVRGKALNTTVVELPFYKRS</sequence>
<name>GCST_CUTAK</name>
<proteinExistence type="inferred from homology"/>
<reference key="1">
    <citation type="journal article" date="2004" name="Science">
        <title>The complete genome sequence of Propionibacterium acnes, a commensal of human skin.</title>
        <authorList>
            <person name="Brueggemann H."/>
            <person name="Henne A."/>
            <person name="Hoster F."/>
            <person name="Liesegang H."/>
            <person name="Wiezer A."/>
            <person name="Strittmatter A."/>
            <person name="Hujer S."/>
            <person name="Duerre P."/>
            <person name="Gottschalk G."/>
        </authorList>
    </citation>
    <scope>NUCLEOTIDE SEQUENCE [LARGE SCALE GENOMIC DNA]</scope>
    <source>
        <strain>DSM 16379 / KPA171202</strain>
    </source>
</reference>
<gene>
    <name evidence="1" type="primary">gcvT</name>
    <name type="ordered locus">PPA0744</name>
</gene>
<organism>
    <name type="scientific">Cutibacterium acnes (strain DSM 16379 / KPA171202)</name>
    <name type="common">Propionibacterium acnes</name>
    <dbReference type="NCBI Taxonomy" id="267747"/>
    <lineage>
        <taxon>Bacteria</taxon>
        <taxon>Bacillati</taxon>
        <taxon>Actinomycetota</taxon>
        <taxon>Actinomycetes</taxon>
        <taxon>Propionibacteriales</taxon>
        <taxon>Propionibacteriaceae</taxon>
        <taxon>Cutibacterium</taxon>
    </lineage>
</organism>
<accession>Q6A9R6</accession>
<protein>
    <recommendedName>
        <fullName evidence="1">Aminomethyltransferase</fullName>
        <ecNumber evidence="1">2.1.2.10</ecNumber>
    </recommendedName>
    <alternativeName>
        <fullName evidence="1">Glycine cleavage system T protein</fullName>
    </alternativeName>
</protein>
<dbReference type="EC" id="2.1.2.10" evidence="1"/>
<dbReference type="EMBL" id="AE017283">
    <property type="protein sequence ID" value="AAT82500.1"/>
    <property type="molecule type" value="Genomic_DNA"/>
</dbReference>
<dbReference type="RefSeq" id="WP_002530960.1">
    <property type="nucleotide sequence ID" value="NZ_CP025935.1"/>
</dbReference>
<dbReference type="SMR" id="Q6A9R6"/>
<dbReference type="EnsemblBacteria" id="AAT82500">
    <property type="protein sequence ID" value="AAT82500"/>
    <property type="gene ID" value="PPA0744"/>
</dbReference>
<dbReference type="KEGG" id="pac:PPA0744"/>
<dbReference type="PATRIC" id="fig|267747.3.peg.781"/>
<dbReference type="eggNOG" id="COG0404">
    <property type="taxonomic scope" value="Bacteria"/>
</dbReference>
<dbReference type="HOGENOM" id="CLU_007884_10_2_11"/>
<dbReference type="Proteomes" id="UP000000603">
    <property type="component" value="Chromosome"/>
</dbReference>
<dbReference type="GO" id="GO:0005829">
    <property type="term" value="C:cytosol"/>
    <property type="evidence" value="ECO:0007669"/>
    <property type="project" value="TreeGrafter"/>
</dbReference>
<dbReference type="GO" id="GO:0005960">
    <property type="term" value="C:glycine cleavage complex"/>
    <property type="evidence" value="ECO:0007669"/>
    <property type="project" value="InterPro"/>
</dbReference>
<dbReference type="GO" id="GO:0004047">
    <property type="term" value="F:aminomethyltransferase activity"/>
    <property type="evidence" value="ECO:0007669"/>
    <property type="project" value="UniProtKB-UniRule"/>
</dbReference>
<dbReference type="GO" id="GO:0008483">
    <property type="term" value="F:transaminase activity"/>
    <property type="evidence" value="ECO:0007669"/>
    <property type="project" value="UniProtKB-KW"/>
</dbReference>
<dbReference type="GO" id="GO:0019464">
    <property type="term" value="P:glycine decarboxylation via glycine cleavage system"/>
    <property type="evidence" value="ECO:0007669"/>
    <property type="project" value="UniProtKB-UniRule"/>
</dbReference>
<dbReference type="FunFam" id="2.40.30.110:FF:000003">
    <property type="entry name" value="Aminomethyltransferase"/>
    <property type="match status" value="1"/>
</dbReference>
<dbReference type="FunFam" id="4.10.1250.10:FF:000001">
    <property type="entry name" value="Aminomethyltransferase"/>
    <property type="match status" value="1"/>
</dbReference>
<dbReference type="Gene3D" id="2.40.30.110">
    <property type="entry name" value="Aminomethyltransferase beta-barrel domains"/>
    <property type="match status" value="1"/>
</dbReference>
<dbReference type="Gene3D" id="3.30.70.1400">
    <property type="entry name" value="Aminomethyltransferase beta-barrel domains"/>
    <property type="match status" value="1"/>
</dbReference>
<dbReference type="Gene3D" id="4.10.1250.10">
    <property type="entry name" value="Aminomethyltransferase fragment"/>
    <property type="match status" value="1"/>
</dbReference>
<dbReference type="Gene3D" id="3.30.1360.120">
    <property type="entry name" value="Probable tRNA modification gtpase trme, domain 1"/>
    <property type="match status" value="1"/>
</dbReference>
<dbReference type="HAMAP" id="MF_00259">
    <property type="entry name" value="GcvT"/>
    <property type="match status" value="1"/>
</dbReference>
<dbReference type="InterPro" id="IPR006223">
    <property type="entry name" value="GCS_T"/>
</dbReference>
<dbReference type="InterPro" id="IPR022903">
    <property type="entry name" value="GCS_T_bac"/>
</dbReference>
<dbReference type="InterPro" id="IPR013977">
    <property type="entry name" value="GCST_C"/>
</dbReference>
<dbReference type="InterPro" id="IPR006222">
    <property type="entry name" value="GCV_T_N"/>
</dbReference>
<dbReference type="InterPro" id="IPR028896">
    <property type="entry name" value="GcvT/YgfZ/DmdA"/>
</dbReference>
<dbReference type="InterPro" id="IPR029043">
    <property type="entry name" value="GcvT/YgfZ_C"/>
</dbReference>
<dbReference type="InterPro" id="IPR027266">
    <property type="entry name" value="TrmE/GcvT_dom1"/>
</dbReference>
<dbReference type="NCBIfam" id="TIGR00528">
    <property type="entry name" value="gcvT"/>
    <property type="match status" value="1"/>
</dbReference>
<dbReference type="NCBIfam" id="NF001567">
    <property type="entry name" value="PRK00389.1"/>
    <property type="match status" value="1"/>
</dbReference>
<dbReference type="PANTHER" id="PTHR43757">
    <property type="entry name" value="AMINOMETHYLTRANSFERASE"/>
    <property type="match status" value="1"/>
</dbReference>
<dbReference type="PANTHER" id="PTHR43757:SF2">
    <property type="entry name" value="AMINOMETHYLTRANSFERASE, MITOCHONDRIAL"/>
    <property type="match status" value="1"/>
</dbReference>
<dbReference type="Pfam" id="PF01571">
    <property type="entry name" value="GCV_T"/>
    <property type="match status" value="1"/>
</dbReference>
<dbReference type="Pfam" id="PF08669">
    <property type="entry name" value="GCV_T_C"/>
    <property type="match status" value="1"/>
</dbReference>
<dbReference type="PIRSF" id="PIRSF006487">
    <property type="entry name" value="GcvT"/>
    <property type="match status" value="1"/>
</dbReference>
<dbReference type="SUPFAM" id="SSF101790">
    <property type="entry name" value="Aminomethyltransferase beta-barrel domain"/>
    <property type="match status" value="1"/>
</dbReference>
<dbReference type="SUPFAM" id="SSF103025">
    <property type="entry name" value="Folate-binding domain"/>
    <property type="match status" value="1"/>
</dbReference>
<evidence type="ECO:0000255" key="1">
    <source>
        <dbReference type="HAMAP-Rule" id="MF_00259"/>
    </source>
</evidence>
<feature type="chain" id="PRO_0000122582" description="Aminomethyltransferase">
    <location>
        <begin position="1"/>
        <end position="371"/>
    </location>
</feature>